<organism>
    <name type="scientific">Bacteroides fragilis (strain YCH46)</name>
    <dbReference type="NCBI Taxonomy" id="295405"/>
    <lineage>
        <taxon>Bacteria</taxon>
        <taxon>Pseudomonadati</taxon>
        <taxon>Bacteroidota</taxon>
        <taxon>Bacteroidia</taxon>
        <taxon>Bacteroidales</taxon>
        <taxon>Bacteroidaceae</taxon>
        <taxon>Bacteroides</taxon>
    </lineage>
</organism>
<feature type="chain" id="PRO_0000130351" description="Large ribosomal subunit protein uL29">
    <location>
        <begin position="1"/>
        <end position="65"/>
    </location>
</feature>
<protein>
    <recommendedName>
        <fullName evidence="1">Large ribosomal subunit protein uL29</fullName>
    </recommendedName>
    <alternativeName>
        <fullName evidence="2">50S ribosomal protein L29</fullName>
    </alternativeName>
</protein>
<dbReference type="EMBL" id="AP006841">
    <property type="protein sequence ID" value="BAD50916.1"/>
    <property type="molecule type" value="Genomic_DNA"/>
</dbReference>
<dbReference type="RefSeq" id="WP_005782204.1">
    <property type="nucleotide sequence ID" value="NZ_UYXF01000007.1"/>
</dbReference>
<dbReference type="RefSeq" id="YP_101450.1">
    <property type="nucleotide sequence ID" value="NC_006347.1"/>
</dbReference>
<dbReference type="SMR" id="Q64NL6"/>
<dbReference type="STRING" id="295405.BF4173"/>
<dbReference type="GeneID" id="93105316"/>
<dbReference type="KEGG" id="bfr:BF4173"/>
<dbReference type="PATRIC" id="fig|295405.11.peg.4027"/>
<dbReference type="HOGENOM" id="CLU_158491_5_1_10"/>
<dbReference type="OrthoDB" id="5296761at2"/>
<dbReference type="Proteomes" id="UP000002197">
    <property type="component" value="Chromosome"/>
</dbReference>
<dbReference type="GO" id="GO:1990904">
    <property type="term" value="C:ribonucleoprotein complex"/>
    <property type="evidence" value="ECO:0007669"/>
    <property type="project" value="UniProtKB-KW"/>
</dbReference>
<dbReference type="GO" id="GO:0005840">
    <property type="term" value="C:ribosome"/>
    <property type="evidence" value="ECO:0007669"/>
    <property type="project" value="UniProtKB-KW"/>
</dbReference>
<dbReference type="GO" id="GO:0003735">
    <property type="term" value="F:structural constituent of ribosome"/>
    <property type="evidence" value="ECO:0007669"/>
    <property type="project" value="InterPro"/>
</dbReference>
<dbReference type="GO" id="GO:0006412">
    <property type="term" value="P:translation"/>
    <property type="evidence" value="ECO:0007669"/>
    <property type="project" value="UniProtKB-UniRule"/>
</dbReference>
<dbReference type="CDD" id="cd00427">
    <property type="entry name" value="Ribosomal_L29_HIP"/>
    <property type="match status" value="1"/>
</dbReference>
<dbReference type="FunFam" id="1.10.287.310:FF:000003">
    <property type="entry name" value="50S ribosomal protein L29"/>
    <property type="match status" value="1"/>
</dbReference>
<dbReference type="Gene3D" id="1.10.287.310">
    <property type="match status" value="1"/>
</dbReference>
<dbReference type="HAMAP" id="MF_00374">
    <property type="entry name" value="Ribosomal_uL29"/>
    <property type="match status" value="1"/>
</dbReference>
<dbReference type="InterPro" id="IPR001854">
    <property type="entry name" value="Ribosomal_uL29"/>
</dbReference>
<dbReference type="InterPro" id="IPR018254">
    <property type="entry name" value="Ribosomal_uL29_CS"/>
</dbReference>
<dbReference type="InterPro" id="IPR036049">
    <property type="entry name" value="Ribosomal_uL29_sf"/>
</dbReference>
<dbReference type="NCBIfam" id="TIGR00012">
    <property type="entry name" value="L29"/>
    <property type="match status" value="1"/>
</dbReference>
<dbReference type="Pfam" id="PF00831">
    <property type="entry name" value="Ribosomal_L29"/>
    <property type="match status" value="1"/>
</dbReference>
<dbReference type="SUPFAM" id="SSF46561">
    <property type="entry name" value="Ribosomal protein L29 (L29p)"/>
    <property type="match status" value="1"/>
</dbReference>
<dbReference type="PROSITE" id="PS00579">
    <property type="entry name" value="RIBOSOMAL_L29"/>
    <property type="match status" value="1"/>
</dbReference>
<accession>Q64NL6</accession>
<keyword id="KW-0687">Ribonucleoprotein</keyword>
<keyword id="KW-0689">Ribosomal protein</keyword>
<sequence>MKIAEIKEMSTNDLVERVEAEVVNYNQMVINHSISPLENPAQIKQLRRTIARMRTELRQRELNNK</sequence>
<gene>
    <name evidence="1" type="primary">rpmC</name>
    <name type="ordered locus">BF4173</name>
</gene>
<name>RL29_BACFR</name>
<comment type="similarity">
    <text evidence="1">Belongs to the universal ribosomal protein uL29 family.</text>
</comment>
<proteinExistence type="inferred from homology"/>
<evidence type="ECO:0000255" key="1">
    <source>
        <dbReference type="HAMAP-Rule" id="MF_00374"/>
    </source>
</evidence>
<evidence type="ECO:0000305" key="2"/>
<reference key="1">
    <citation type="journal article" date="2004" name="Proc. Natl. Acad. Sci. U.S.A.">
        <title>Genomic analysis of Bacteroides fragilis reveals extensive DNA inversions regulating cell surface adaptation.</title>
        <authorList>
            <person name="Kuwahara T."/>
            <person name="Yamashita A."/>
            <person name="Hirakawa H."/>
            <person name="Nakayama H."/>
            <person name="Toh H."/>
            <person name="Okada N."/>
            <person name="Kuhara S."/>
            <person name="Hattori M."/>
            <person name="Hayashi T."/>
            <person name="Ohnishi Y."/>
        </authorList>
    </citation>
    <scope>NUCLEOTIDE SEQUENCE [LARGE SCALE GENOMIC DNA]</scope>
    <source>
        <strain>YCH46</strain>
    </source>
</reference>